<evidence type="ECO:0000250" key="1"/>
<evidence type="ECO:0000255" key="2">
    <source>
        <dbReference type="HAMAP-Rule" id="MF_00614"/>
    </source>
</evidence>
<dbReference type="EC" id="3.1.-.-" evidence="2"/>
<dbReference type="EMBL" id="CP000855">
    <property type="protein sequence ID" value="ACJ16587.1"/>
    <property type="molecule type" value="Genomic_DNA"/>
</dbReference>
<dbReference type="RefSeq" id="WP_012572059.1">
    <property type="nucleotide sequence ID" value="NC_011529.1"/>
</dbReference>
<dbReference type="SMR" id="B6YWX4"/>
<dbReference type="STRING" id="523850.TON_1099"/>
<dbReference type="GeneID" id="7018121"/>
<dbReference type="KEGG" id="ton:TON_1099"/>
<dbReference type="PATRIC" id="fig|523850.10.peg.1107"/>
<dbReference type="eggNOG" id="arCOG04050">
    <property type="taxonomic scope" value="Archaea"/>
</dbReference>
<dbReference type="HOGENOM" id="CLU_032444_0_0_2"/>
<dbReference type="OrthoDB" id="9593at2157"/>
<dbReference type="Proteomes" id="UP000002727">
    <property type="component" value="Chromosome"/>
</dbReference>
<dbReference type="GO" id="GO:0008409">
    <property type="term" value="F:5'-3' exonuclease activity"/>
    <property type="evidence" value="ECO:0007669"/>
    <property type="project" value="UniProtKB-UniRule"/>
</dbReference>
<dbReference type="GO" id="GO:0017108">
    <property type="term" value="F:5'-flap endonuclease activity"/>
    <property type="evidence" value="ECO:0007669"/>
    <property type="project" value="UniProtKB-UniRule"/>
</dbReference>
<dbReference type="GO" id="GO:0003677">
    <property type="term" value="F:DNA binding"/>
    <property type="evidence" value="ECO:0007669"/>
    <property type="project" value="UniProtKB-UniRule"/>
</dbReference>
<dbReference type="GO" id="GO:0000287">
    <property type="term" value="F:magnesium ion binding"/>
    <property type="evidence" value="ECO:0007669"/>
    <property type="project" value="UniProtKB-UniRule"/>
</dbReference>
<dbReference type="GO" id="GO:0006281">
    <property type="term" value="P:DNA repair"/>
    <property type="evidence" value="ECO:0007669"/>
    <property type="project" value="UniProtKB-UniRule"/>
</dbReference>
<dbReference type="GO" id="GO:0043137">
    <property type="term" value="P:DNA replication, removal of RNA primer"/>
    <property type="evidence" value="ECO:0007669"/>
    <property type="project" value="UniProtKB-UniRule"/>
</dbReference>
<dbReference type="CDD" id="cd09903">
    <property type="entry name" value="H3TH_FEN1-Arc"/>
    <property type="match status" value="1"/>
</dbReference>
<dbReference type="CDD" id="cd09867">
    <property type="entry name" value="PIN_FEN1"/>
    <property type="match status" value="1"/>
</dbReference>
<dbReference type="FunFam" id="1.10.150.20:FF:000087">
    <property type="entry name" value="Flap endonuclease 1"/>
    <property type="match status" value="1"/>
</dbReference>
<dbReference type="FunFam" id="3.40.50.1010:FF:000016">
    <property type="entry name" value="Flap endonuclease 1"/>
    <property type="match status" value="1"/>
</dbReference>
<dbReference type="Gene3D" id="1.10.150.20">
    <property type="entry name" value="5' to 3' exonuclease, C-terminal subdomain"/>
    <property type="match status" value="1"/>
</dbReference>
<dbReference type="Gene3D" id="3.40.50.1010">
    <property type="entry name" value="5'-nuclease"/>
    <property type="match status" value="1"/>
</dbReference>
<dbReference type="HAMAP" id="MF_00614">
    <property type="entry name" value="Fen"/>
    <property type="match status" value="1"/>
</dbReference>
<dbReference type="InterPro" id="IPR036279">
    <property type="entry name" value="5-3_exonuclease_C_sf"/>
</dbReference>
<dbReference type="InterPro" id="IPR023426">
    <property type="entry name" value="Flap_endonuc"/>
</dbReference>
<dbReference type="InterPro" id="IPR019973">
    <property type="entry name" value="Flap_endonuc_arc"/>
</dbReference>
<dbReference type="InterPro" id="IPR008918">
    <property type="entry name" value="HhH2"/>
</dbReference>
<dbReference type="InterPro" id="IPR029060">
    <property type="entry name" value="PIN-like_dom_sf"/>
</dbReference>
<dbReference type="InterPro" id="IPR006086">
    <property type="entry name" value="XPG-I_dom"/>
</dbReference>
<dbReference type="InterPro" id="IPR006084">
    <property type="entry name" value="XPG/Rad2"/>
</dbReference>
<dbReference type="InterPro" id="IPR019974">
    <property type="entry name" value="XPG_CS"/>
</dbReference>
<dbReference type="InterPro" id="IPR006085">
    <property type="entry name" value="XPG_DNA_repair_N"/>
</dbReference>
<dbReference type="NCBIfam" id="TIGR03674">
    <property type="entry name" value="fen_arch"/>
    <property type="match status" value="1"/>
</dbReference>
<dbReference type="PANTHER" id="PTHR11081:SF9">
    <property type="entry name" value="FLAP ENDONUCLEASE 1"/>
    <property type="match status" value="1"/>
</dbReference>
<dbReference type="PANTHER" id="PTHR11081">
    <property type="entry name" value="FLAP ENDONUCLEASE FAMILY MEMBER"/>
    <property type="match status" value="1"/>
</dbReference>
<dbReference type="Pfam" id="PF00867">
    <property type="entry name" value="XPG_I"/>
    <property type="match status" value="1"/>
</dbReference>
<dbReference type="Pfam" id="PF00752">
    <property type="entry name" value="XPG_N"/>
    <property type="match status" value="1"/>
</dbReference>
<dbReference type="PRINTS" id="PR00853">
    <property type="entry name" value="XPGRADSUPER"/>
</dbReference>
<dbReference type="SMART" id="SM00279">
    <property type="entry name" value="HhH2"/>
    <property type="match status" value="1"/>
</dbReference>
<dbReference type="SMART" id="SM00484">
    <property type="entry name" value="XPGI"/>
    <property type="match status" value="1"/>
</dbReference>
<dbReference type="SMART" id="SM00485">
    <property type="entry name" value="XPGN"/>
    <property type="match status" value="1"/>
</dbReference>
<dbReference type="SUPFAM" id="SSF47807">
    <property type="entry name" value="5' to 3' exonuclease, C-terminal subdomain"/>
    <property type="match status" value="1"/>
</dbReference>
<dbReference type="SUPFAM" id="SSF88723">
    <property type="entry name" value="PIN domain-like"/>
    <property type="match status" value="1"/>
</dbReference>
<dbReference type="PROSITE" id="PS00841">
    <property type="entry name" value="XPG_1"/>
    <property type="match status" value="1"/>
</dbReference>
<reference key="1">
    <citation type="journal article" date="2008" name="J. Bacteriol.">
        <title>The complete genome sequence of Thermococcus onnurineus NA1 reveals a mixed heterotrophic and carboxydotrophic metabolism.</title>
        <authorList>
            <person name="Lee H.S."/>
            <person name="Kang S.G."/>
            <person name="Bae S.S."/>
            <person name="Lim J.K."/>
            <person name="Cho Y."/>
            <person name="Kim Y.J."/>
            <person name="Jeon J.H."/>
            <person name="Cha S.-S."/>
            <person name="Kwon K.K."/>
            <person name="Kim H.-T."/>
            <person name="Park C.-J."/>
            <person name="Lee H.-W."/>
            <person name="Kim S.I."/>
            <person name="Chun J."/>
            <person name="Colwell R.R."/>
            <person name="Kim S.-J."/>
            <person name="Lee J.-H."/>
        </authorList>
    </citation>
    <scope>NUCLEOTIDE SEQUENCE [LARGE SCALE GENOMIC DNA]</scope>
    <source>
        <strain>NA1</strain>
    </source>
</reference>
<sequence>MGVQIGELIPRKEIELENLYGRRVAIDAFNAIYQFLSTIRQRDGTPLMDSQGRITSHLSGLFYRTINLMEAGIKPAYIFDGKPPDFKKRELEKRREAREEAEEKWYEALERGDLEEAKKYAMRATRVNEGLINDAKTLLELMGIPVIQAPSEGEAQAAYMAAKKKVYASASQDYDSLLFGAPKLVRNLTITGRRKLPGKNVYVEVKPELIVLEEVLKELSIDREKLIEMAILVGTDYNPGGIKGIGPKKALTIVKRTKDPLKKYQKESEVDLYAIKEFFLNPPVTDDYELKWREPDEEGIIKFLCDEHDFSEERVKNGLERLKKAVKAGKQSTLESWFGRR</sequence>
<organism>
    <name type="scientific">Thermococcus onnurineus (strain NA1)</name>
    <dbReference type="NCBI Taxonomy" id="523850"/>
    <lineage>
        <taxon>Archaea</taxon>
        <taxon>Methanobacteriati</taxon>
        <taxon>Methanobacteriota</taxon>
        <taxon>Thermococci</taxon>
        <taxon>Thermococcales</taxon>
        <taxon>Thermococcaceae</taxon>
        <taxon>Thermococcus</taxon>
    </lineage>
</organism>
<name>FEN_THEON</name>
<comment type="function">
    <text evidence="1">Structure-specific nuclease with 5'-flap endonuclease and 5'-3' exonuclease activities involved in DNA replication and repair. During DNA replication, cleaves the 5'-overhanging flap structure that is generated by displacement synthesis when DNA polymerase encounters the 5'-end of a downstream Okazaki fragment. Binds the unpaired 3'-DNA end and kinks the DNA to facilitate 5' cleavage specificity. Cleaves one nucleotide into the double-stranded DNA from the junction in flap DNA, leaving a nick for ligation. Also involved in the base excision repair (BER) pathway. Acts as a genome stabilization factor that prevents flaps from equilibrating into structures that lead to duplications and deletions. Also possesses 5'-3' exonuclease activity on nicked or gapped double-stranded DNA (By similarity).</text>
</comment>
<comment type="cofactor">
    <cofactor evidence="2">
        <name>Mg(2+)</name>
        <dbReference type="ChEBI" id="CHEBI:18420"/>
    </cofactor>
    <text evidence="2">Binds 2 magnesium ions per subunit. They probably participate in the reaction catalyzed by the enzyme. May bind an additional third magnesium ion after substrate binding.</text>
</comment>
<comment type="subunit">
    <text evidence="2">Interacts with PCNA. PCNA stimulates the nuclease activity without altering cleavage specificity.</text>
</comment>
<comment type="similarity">
    <text evidence="2">Belongs to the XPG/RAD2 endonuclease family. FEN1 subfamily.</text>
</comment>
<accession>B6YWX4</accession>
<feature type="chain" id="PRO_1000130406" description="Flap endonuclease 1">
    <location>
        <begin position="1"/>
        <end position="341"/>
    </location>
</feature>
<feature type="region of interest" description="N-domain">
    <location>
        <begin position="1"/>
        <end position="98"/>
    </location>
</feature>
<feature type="region of interest" description="I-domain">
    <location>
        <begin position="116"/>
        <end position="258"/>
    </location>
</feature>
<feature type="region of interest" description="Interaction with PCNA" evidence="2">
    <location>
        <begin position="330"/>
        <end position="338"/>
    </location>
</feature>
<feature type="binding site" evidence="2">
    <location>
        <position position="27"/>
    </location>
    <ligand>
        <name>Mg(2+)</name>
        <dbReference type="ChEBI" id="CHEBI:18420"/>
        <label>1</label>
    </ligand>
</feature>
<feature type="binding site" evidence="2">
    <location>
        <position position="80"/>
    </location>
    <ligand>
        <name>Mg(2+)</name>
        <dbReference type="ChEBI" id="CHEBI:18420"/>
        <label>1</label>
    </ligand>
</feature>
<feature type="binding site" evidence="2">
    <location>
        <position position="152"/>
    </location>
    <ligand>
        <name>Mg(2+)</name>
        <dbReference type="ChEBI" id="CHEBI:18420"/>
        <label>1</label>
    </ligand>
</feature>
<feature type="binding site" evidence="2">
    <location>
        <position position="154"/>
    </location>
    <ligand>
        <name>Mg(2+)</name>
        <dbReference type="ChEBI" id="CHEBI:18420"/>
        <label>1</label>
    </ligand>
</feature>
<feature type="binding site" evidence="2">
    <location>
        <position position="173"/>
    </location>
    <ligand>
        <name>Mg(2+)</name>
        <dbReference type="ChEBI" id="CHEBI:18420"/>
        <label>2</label>
    </ligand>
</feature>
<feature type="binding site" evidence="2">
    <location>
        <position position="175"/>
    </location>
    <ligand>
        <name>Mg(2+)</name>
        <dbReference type="ChEBI" id="CHEBI:18420"/>
        <label>2</label>
    </ligand>
</feature>
<feature type="binding site" evidence="2">
    <location>
        <position position="236"/>
    </location>
    <ligand>
        <name>Mg(2+)</name>
        <dbReference type="ChEBI" id="CHEBI:18420"/>
        <label>2</label>
    </ligand>
</feature>
<gene>
    <name evidence="2" type="primary">fen</name>
    <name type="ordered locus">TON_1099</name>
</gene>
<proteinExistence type="inferred from homology"/>
<keyword id="KW-0227">DNA damage</keyword>
<keyword id="KW-0234">DNA repair</keyword>
<keyword id="KW-0235">DNA replication</keyword>
<keyword id="KW-0255">Endonuclease</keyword>
<keyword id="KW-0269">Exonuclease</keyword>
<keyword id="KW-0378">Hydrolase</keyword>
<keyword id="KW-0460">Magnesium</keyword>
<keyword id="KW-0479">Metal-binding</keyword>
<keyword id="KW-0540">Nuclease</keyword>
<protein>
    <recommendedName>
        <fullName evidence="2">Flap endonuclease 1</fullName>
        <shortName evidence="2">FEN-1</shortName>
        <ecNumber evidence="2">3.1.-.-</ecNumber>
    </recommendedName>
    <alternativeName>
        <fullName evidence="2">Flap structure-specific endonuclease 1</fullName>
    </alternativeName>
</protein>